<reference key="1">
    <citation type="journal article" date="1997" name="Nature">
        <title>The complete genome sequence of the hyperthermophilic, sulphate-reducing archaeon Archaeoglobus fulgidus.</title>
        <authorList>
            <person name="Klenk H.-P."/>
            <person name="Clayton R.A."/>
            <person name="Tomb J.-F."/>
            <person name="White O."/>
            <person name="Nelson K.E."/>
            <person name="Ketchum K.A."/>
            <person name="Dodson R.J."/>
            <person name="Gwinn M.L."/>
            <person name="Hickey E.K."/>
            <person name="Peterson J.D."/>
            <person name="Richardson D.L."/>
            <person name="Kerlavage A.R."/>
            <person name="Graham D.E."/>
            <person name="Kyrpides N.C."/>
            <person name="Fleischmann R.D."/>
            <person name="Quackenbush J."/>
            <person name="Lee N.H."/>
            <person name="Sutton G.G."/>
            <person name="Gill S.R."/>
            <person name="Kirkness E.F."/>
            <person name="Dougherty B.A."/>
            <person name="McKenney K."/>
            <person name="Adams M.D."/>
            <person name="Loftus B.J."/>
            <person name="Peterson S.N."/>
            <person name="Reich C.I."/>
            <person name="McNeil L.K."/>
            <person name="Badger J.H."/>
            <person name="Glodek A."/>
            <person name="Zhou L."/>
            <person name="Overbeek R."/>
            <person name="Gocayne J.D."/>
            <person name="Weidman J.F."/>
            <person name="McDonald L.A."/>
            <person name="Utterback T.R."/>
            <person name="Cotton M.D."/>
            <person name="Spriggs T."/>
            <person name="Artiach P."/>
            <person name="Kaine B.P."/>
            <person name="Sykes S.M."/>
            <person name="Sadow P.W."/>
            <person name="D'Andrea K.P."/>
            <person name="Bowman C."/>
            <person name="Fujii C."/>
            <person name="Garland S.A."/>
            <person name="Mason T.M."/>
            <person name="Olsen G.J."/>
            <person name="Fraser C.M."/>
            <person name="Smith H.O."/>
            <person name="Woese C.R."/>
            <person name="Venter J.C."/>
        </authorList>
    </citation>
    <scope>NUCLEOTIDE SEQUENCE [LARGE SCALE GENOMIC DNA]</scope>
    <source>
        <strain>ATCC 49558 / DSM 4304 / JCM 9628 / NBRC 100126 / VC-16</strain>
    </source>
</reference>
<evidence type="ECO:0000255" key="1"/>
<feature type="signal peptide" evidence="1">
    <location>
        <begin position="1"/>
        <end position="25"/>
    </location>
</feature>
<feature type="chain" id="PRO_0000013658" description="Uncharacterized protein AF_1276">
    <location>
        <begin position="26"/>
        <end position="94"/>
    </location>
</feature>
<accession>O28992</accession>
<protein>
    <recommendedName>
        <fullName>Uncharacterized protein AF_1276</fullName>
    </recommendedName>
</protein>
<name>Y1276_ARCFU</name>
<keyword id="KW-1185">Reference proteome</keyword>
<keyword id="KW-0732">Signal</keyword>
<proteinExistence type="inferred from homology"/>
<dbReference type="EMBL" id="AE000782">
    <property type="protein sequence ID" value="AAB89977.1"/>
    <property type="molecule type" value="Genomic_DNA"/>
</dbReference>
<dbReference type="PIR" id="C69409">
    <property type="entry name" value="C69409"/>
</dbReference>
<dbReference type="RefSeq" id="WP_010878771.1">
    <property type="nucleotide sequence ID" value="NC_000917.1"/>
</dbReference>
<dbReference type="PaxDb" id="224325-AF_1276"/>
<dbReference type="EnsemblBacteria" id="AAB89977">
    <property type="protein sequence ID" value="AAB89977"/>
    <property type="gene ID" value="AF_1276"/>
</dbReference>
<dbReference type="KEGG" id="afu:AF_1276"/>
<dbReference type="HOGENOM" id="CLU_2379221_0_0_2"/>
<dbReference type="Proteomes" id="UP000002199">
    <property type="component" value="Chromosome"/>
</dbReference>
<sequence length="94" mass="10151">MRAAIAVLFIALVGLATYHLVMSQANPELRTVDIEGKKLILRGFENPAVKVKGCGEEALLHGSIVEIPLNCSKVKVEVYSEGRLVFSSSLSLNP</sequence>
<organism>
    <name type="scientific">Archaeoglobus fulgidus (strain ATCC 49558 / DSM 4304 / JCM 9628 / NBRC 100126 / VC-16)</name>
    <dbReference type="NCBI Taxonomy" id="224325"/>
    <lineage>
        <taxon>Archaea</taxon>
        <taxon>Methanobacteriati</taxon>
        <taxon>Methanobacteriota</taxon>
        <taxon>Archaeoglobi</taxon>
        <taxon>Archaeoglobales</taxon>
        <taxon>Archaeoglobaceae</taxon>
        <taxon>Archaeoglobus</taxon>
    </lineage>
</organism>
<gene>
    <name type="ordered locus">AF_1276</name>
</gene>